<sequence length="509" mass="56934">MIGTIAGVSGIAGAAVGAGACYLWLKNSTQKKFAHLEMEAKAKAKAISNEAELLLQESQMKIKTRELEHEAEFQKRLVQVEERNRALILEQKAVEKEEEALLLLEQRILEKESVLEALEEKKQKQISETVEKLQHAASMTQEEAKAYILEKVEEQSRAEIASIVRRYEQLAKEEGEKKANYILAQATTRYAGEFAGERLINLVNLPSDEHKGRIIGKEGRNIKALEMLLGVDIVIDETPGVILVSSFNLYRRAIATRVIEILIEDGRIHPGRIEEVHEKVEKEFEEKTYEEGENILIDLGLFPMHEELVKLIGRLKYRASYGQNALAHTLEVAKLARVMAAEMGGDEKLALRAGLLHDIGKALTQDMGGSHVEIGAELCRRYNEHPTVINAIYAHHGHEEPDSVESAAVCAADTLSAARPGARREVLESFTKRVKEIEEIATSKENVERAYAINAGREIRVFVNANRMSDNEAVLLSKEIAKEIKDKVQFPGEIKVNVIRETRAVSIAK</sequence>
<keyword id="KW-1003">Cell membrane</keyword>
<keyword id="KW-0255">Endonuclease</keyword>
<keyword id="KW-0378">Hydrolase</keyword>
<keyword id="KW-0472">Membrane</keyword>
<keyword id="KW-0540">Nuclease</keyword>
<keyword id="KW-0694">RNA-binding</keyword>
<keyword id="KW-0812">Transmembrane</keyword>
<keyword id="KW-1133">Transmembrane helix</keyword>
<organism>
    <name type="scientific">Sulfurovum sp. (strain NBC37-1)</name>
    <dbReference type="NCBI Taxonomy" id="387093"/>
    <lineage>
        <taxon>Bacteria</taxon>
        <taxon>Pseudomonadati</taxon>
        <taxon>Campylobacterota</taxon>
        <taxon>Epsilonproteobacteria</taxon>
        <taxon>Campylobacterales</taxon>
        <taxon>Sulfurovaceae</taxon>
        <taxon>Sulfurovum</taxon>
    </lineage>
</organism>
<comment type="function">
    <text evidence="1">Endoribonuclease that initiates mRNA decay.</text>
</comment>
<comment type="subcellular location">
    <subcellularLocation>
        <location evidence="1">Cell membrane</location>
        <topology evidence="1">Single-pass membrane protein</topology>
    </subcellularLocation>
</comment>
<comment type="similarity">
    <text evidence="1">Belongs to the RNase Y family.</text>
</comment>
<proteinExistence type="inferred from homology"/>
<feature type="chain" id="PRO_0000344956" description="Ribonuclease Y">
    <location>
        <begin position="1"/>
        <end position="509"/>
    </location>
</feature>
<feature type="transmembrane region" description="Helical" evidence="1">
    <location>
        <begin position="5"/>
        <end position="25"/>
    </location>
</feature>
<feature type="domain" description="KH" evidence="1">
    <location>
        <begin position="199"/>
        <end position="265"/>
    </location>
</feature>
<feature type="domain" description="HD" evidence="2">
    <location>
        <begin position="325"/>
        <end position="418"/>
    </location>
</feature>
<evidence type="ECO:0000255" key="1">
    <source>
        <dbReference type="HAMAP-Rule" id="MF_00335"/>
    </source>
</evidence>
<evidence type="ECO:0000255" key="2">
    <source>
        <dbReference type="PROSITE-ProRule" id="PRU01175"/>
    </source>
</evidence>
<reference key="1">
    <citation type="journal article" date="2007" name="Proc. Natl. Acad. Sci. U.S.A.">
        <title>Deep-sea vent epsilon-proteobacterial genomes provide insights into emergence of pathogens.</title>
        <authorList>
            <person name="Nakagawa S."/>
            <person name="Takaki Y."/>
            <person name="Shimamura S."/>
            <person name="Reysenbach A.-L."/>
            <person name="Takai K."/>
            <person name="Horikoshi K."/>
        </authorList>
    </citation>
    <scope>NUCLEOTIDE SEQUENCE [LARGE SCALE GENOMIC DNA]</scope>
    <source>
        <strain>NBC37-1</strain>
    </source>
</reference>
<accession>A6Q7V0</accession>
<dbReference type="EC" id="3.1.-.-" evidence="1"/>
<dbReference type="EMBL" id="AP009179">
    <property type="protein sequence ID" value="BAF71559.1"/>
    <property type="molecule type" value="Genomic_DNA"/>
</dbReference>
<dbReference type="RefSeq" id="WP_011980292.1">
    <property type="nucleotide sequence ID" value="NC_009663.1"/>
</dbReference>
<dbReference type="SMR" id="A6Q7V0"/>
<dbReference type="STRING" id="387093.SUN_0600"/>
<dbReference type="KEGG" id="sun:SUN_0600"/>
<dbReference type="eggNOG" id="COG1418">
    <property type="taxonomic scope" value="Bacteria"/>
</dbReference>
<dbReference type="HOGENOM" id="CLU_028328_1_0_7"/>
<dbReference type="OrthoDB" id="9803205at2"/>
<dbReference type="Proteomes" id="UP000006378">
    <property type="component" value="Chromosome"/>
</dbReference>
<dbReference type="GO" id="GO:0005886">
    <property type="term" value="C:plasma membrane"/>
    <property type="evidence" value="ECO:0007669"/>
    <property type="project" value="UniProtKB-SubCell"/>
</dbReference>
<dbReference type="GO" id="GO:0003723">
    <property type="term" value="F:RNA binding"/>
    <property type="evidence" value="ECO:0007669"/>
    <property type="project" value="UniProtKB-UniRule"/>
</dbReference>
<dbReference type="GO" id="GO:0004521">
    <property type="term" value="F:RNA endonuclease activity"/>
    <property type="evidence" value="ECO:0007669"/>
    <property type="project" value="UniProtKB-UniRule"/>
</dbReference>
<dbReference type="GO" id="GO:0006402">
    <property type="term" value="P:mRNA catabolic process"/>
    <property type="evidence" value="ECO:0007669"/>
    <property type="project" value="UniProtKB-UniRule"/>
</dbReference>
<dbReference type="CDD" id="cd00077">
    <property type="entry name" value="HDc"/>
    <property type="match status" value="1"/>
</dbReference>
<dbReference type="CDD" id="cd22431">
    <property type="entry name" value="KH-I_RNaseY"/>
    <property type="match status" value="1"/>
</dbReference>
<dbReference type="Gene3D" id="1.10.3210.10">
    <property type="entry name" value="Hypothetical protein af1432"/>
    <property type="match status" value="1"/>
</dbReference>
<dbReference type="Gene3D" id="3.30.1370.10">
    <property type="entry name" value="K Homology domain, type 1"/>
    <property type="match status" value="1"/>
</dbReference>
<dbReference type="HAMAP" id="MF_00335">
    <property type="entry name" value="RNase_Y"/>
    <property type="match status" value="1"/>
</dbReference>
<dbReference type="InterPro" id="IPR003607">
    <property type="entry name" value="HD/PDEase_dom"/>
</dbReference>
<dbReference type="InterPro" id="IPR006674">
    <property type="entry name" value="HD_domain"/>
</dbReference>
<dbReference type="InterPro" id="IPR006675">
    <property type="entry name" value="HDIG_dom"/>
</dbReference>
<dbReference type="InterPro" id="IPR004087">
    <property type="entry name" value="KH_dom"/>
</dbReference>
<dbReference type="InterPro" id="IPR004088">
    <property type="entry name" value="KH_dom_type_1"/>
</dbReference>
<dbReference type="InterPro" id="IPR036612">
    <property type="entry name" value="KH_dom_type_1_sf"/>
</dbReference>
<dbReference type="InterPro" id="IPR017705">
    <property type="entry name" value="Ribonuclease_Y"/>
</dbReference>
<dbReference type="InterPro" id="IPR022711">
    <property type="entry name" value="RNase_Y_N"/>
</dbReference>
<dbReference type="NCBIfam" id="TIGR00277">
    <property type="entry name" value="HDIG"/>
    <property type="match status" value="1"/>
</dbReference>
<dbReference type="NCBIfam" id="TIGR03319">
    <property type="entry name" value="RNase_Y"/>
    <property type="match status" value="1"/>
</dbReference>
<dbReference type="PANTHER" id="PTHR12826">
    <property type="entry name" value="RIBONUCLEASE Y"/>
    <property type="match status" value="1"/>
</dbReference>
<dbReference type="PANTHER" id="PTHR12826:SF15">
    <property type="entry name" value="RIBONUCLEASE Y"/>
    <property type="match status" value="1"/>
</dbReference>
<dbReference type="Pfam" id="PF01966">
    <property type="entry name" value="HD"/>
    <property type="match status" value="1"/>
</dbReference>
<dbReference type="Pfam" id="PF00013">
    <property type="entry name" value="KH_1"/>
    <property type="match status" value="1"/>
</dbReference>
<dbReference type="Pfam" id="PF12072">
    <property type="entry name" value="RNase_Y_N"/>
    <property type="match status" value="1"/>
</dbReference>
<dbReference type="SMART" id="SM00471">
    <property type="entry name" value="HDc"/>
    <property type="match status" value="1"/>
</dbReference>
<dbReference type="SMART" id="SM00322">
    <property type="entry name" value="KH"/>
    <property type="match status" value="1"/>
</dbReference>
<dbReference type="SUPFAM" id="SSF54791">
    <property type="entry name" value="Eukaryotic type KH-domain (KH-domain type I)"/>
    <property type="match status" value="1"/>
</dbReference>
<dbReference type="SUPFAM" id="SSF109604">
    <property type="entry name" value="HD-domain/PDEase-like"/>
    <property type="match status" value="1"/>
</dbReference>
<dbReference type="PROSITE" id="PS51831">
    <property type="entry name" value="HD"/>
    <property type="match status" value="1"/>
</dbReference>
<gene>
    <name evidence="1" type="primary">rny</name>
    <name type="ordered locus">SUN_0600</name>
</gene>
<name>RNY_SULNB</name>
<protein>
    <recommendedName>
        <fullName evidence="1">Ribonuclease Y</fullName>
        <shortName evidence="1">RNase Y</shortName>
        <ecNumber evidence="1">3.1.-.-</ecNumber>
    </recommendedName>
</protein>